<sequence length="1576" mass="175618">MENILCFLNSYTETGLSPDSHWLDIDPNFICLSGLGLFILYLFYVVLTLYSSPTEKNNDIQKHQGRAKRRRKGGTFKGFPDWKSFQREEEEERKLLSLLKSFGPPVSCSPRGQHHDTNHFRRLLCPDPVCRVCKRATADIQQLLSWESLKDAAPSVSPLASSASATESSFTLASTPSATPPEDLILSPRPKASPPPPLILSPDLITTLADLFSPSPLRDPLPPQPVSPLDSKFPIDHSPPQQLPFPLLPPHHIERVESSLQPEASLSLNTIFSFGSTLCQDISQAMNPIDSCARHHGPPIPSALPPEDCTVTQSKSSLTILKTFPEMLSLGGSGGSSTSAPTIKGIDHSHLASSEFTWWQPHAKDSFSSNFVPSDFMEELLTLHSSEAFLGGHSVANLIEPVNISFLSHDILALLERQVKKRGDFLMWKENGKKPGSFPKQLRPNYQLNSSRNMLTSIAVKHDLAESFPFWASKGKLEWQHIHQQPPHSKCFEDHLEQKYVQLFWGLPSLHSESLHPTVLVQRGHSSMFVFFNGITNTSISHESPVLPPPQPLSLPSTQPLPLPQTLPQGQSPHLTQVKSLAQPQSPFRALLPSPLFLIRICGVCFHRPQNEARSLLPSEINHLEWNVLQKVQESLWGLPSVVQKSQEDFCPPAPNPELVRKSFKVHVPISIIPGDFPLSSEVRKKLEQHIRRRLIQRRWGLPRRIHESLSLLRPQSKISELSVSERIHGPLNISLVEGQRCNVLKKSASSFPRSFHERSSNMLSMENVGNYQGYSQETVPKDHLLHGPETSSDKDLRSNSERDLETHMMHLSGNDSGVRLGQKQLENALTVRLSKKFEEINEGRMPGTVHSSWHSVKQTMSLPEKSHSQIKHRNLVTLVSEDHCVDTSQEISFLSSNKQKMLEAHIKTFRMRMLWGLPLKVLESIEIFKSKADLSTSFSHFDLPSSATFISQGDSKDGVSKSRSRSTFQGEKLGTTSSVPILDRPHPVSSPVVQEGQGTLRRQFSDTDHDLIETDSKDGASTSLRRGTTDFQSEKLDSTSSFPILGHSYLVTSPVNQEKQGTLRREFSDTDNDLTESVRTTEDGRQTFLPPPHSIVDEVSQKQTVLASRCSAELPIMQAGAGCESWDKRKSSFHNVDRLQGSRKTFPVTNALQSQTRNNLTTSKSGSCSLTNVKASTSNETEIFPPRISVPQDPKSSYLKNQMLSQLKLVQRKHSQPQSHFTDMSFALDNLSSKDLLTNSQGISSGDMGTSQVVHVHLEDSGIRVAQKQEPRVPTCVLQKCQVTNFPPAVNRVSPVRPKGGELDGGDAGLGTSQRRRKSLPVHNKTSGEVLGSKSSPTLKTQPPPENLFRKWMKTSLQWFNKPSISYEEQESSWEKGSSLSSCVQNIGRVIRAAFTGTTEAQKIRKDTREFLEEKLGHRHGIDITCPQEPLSFPVGLGKAQHNPEVHVRAEPVQGCPCNYRAPSCKVTRTKSCSQQAIFVGQNYPTRIRQIIDKDRQPQKVEAFKGKILCQSHPQSMPHRKPVPHPNPTCRRQVSLVCPAVPTSAKSPVFSDVPFLTGQKMLPKHLQGGKFPPTK</sequence>
<gene>
    <name type="primary">SPATA31D1</name>
    <name type="synonym">FAM75D1</name>
</gene>
<reference key="1">
    <citation type="journal article" date="2004" name="Nat. Genet.">
        <title>Complete sequencing and characterization of 21,243 full-length human cDNAs.</title>
        <authorList>
            <person name="Ota T."/>
            <person name="Suzuki Y."/>
            <person name="Nishikawa T."/>
            <person name="Otsuki T."/>
            <person name="Sugiyama T."/>
            <person name="Irie R."/>
            <person name="Wakamatsu A."/>
            <person name="Hayashi K."/>
            <person name="Sato H."/>
            <person name="Nagai K."/>
            <person name="Kimura K."/>
            <person name="Makita H."/>
            <person name="Sekine M."/>
            <person name="Obayashi M."/>
            <person name="Nishi T."/>
            <person name="Shibahara T."/>
            <person name="Tanaka T."/>
            <person name="Ishii S."/>
            <person name="Yamamoto J."/>
            <person name="Saito K."/>
            <person name="Kawai Y."/>
            <person name="Isono Y."/>
            <person name="Nakamura Y."/>
            <person name="Nagahari K."/>
            <person name="Murakami K."/>
            <person name="Yasuda T."/>
            <person name="Iwayanagi T."/>
            <person name="Wagatsuma M."/>
            <person name="Shiratori A."/>
            <person name="Sudo H."/>
            <person name="Hosoiri T."/>
            <person name="Kaku Y."/>
            <person name="Kodaira H."/>
            <person name="Kondo H."/>
            <person name="Sugawara M."/>
            <person name="Takahashi M."/>
            <person name="Kanda K."/>
            <person name="Yokoi T."/>
            <person name="Furuya T."/>
            <person name="Kikkawa E."/>
            <person name="Omura Y."/>
            <person name="Abe K."/>
            <person name="Kamihara K."/>
            <person name="Katsuta N."/>
            <person name="Sato K."/>
            <person name="Tanikawa M."/>
            <person name="Yamazaki M."/>
            <person name="Ninomiya K."/>
            <person name="Ishibashi T."/>
            <person name="Yamashita H."/>
            <person name="Murakawa K."/>
            <person name="Fujimori K."/>
            <person name="Tanai H."/>
            <person name="Kimata M."/>
            <person name="Watanabe M."/>
            <person name="Hiraoka S."/>
            <person name="Chiba Y."/>
            <person name="Ishida S."/>
            <person name="Ono Y."/>
            <person name="Takiguchi S."/>
            <person name="Watanabe S."/>
            <person name="Yosida M."/>
            <person name="Hotuta T."/>
            <person name="Kusano J."/>
            <person name="Kanehori K."/>
            <person name="Takahashi-Fujii A."/>
            <person name="Hara H."/>
            <person name="Tanase T.-O."/>
            <person name="Nomura Y."/>
            <person name="Togiya S."/>
            <person name="Komai F."/>
            <person name="Hara R."/>
            <person name="Takeuchi K."/>
            <person name="Arita M."/>
            <person name="Imose N."/>
            <person name="Musashino K."/>
            <person name="Yuuki H."/>
            <person name="Oshima A."/>
            <person name="Sasaki N."/>
            <person name="Aotsuka S."/>
            <person name="Yoshikawa Y."/>
            <person name="Matsunawa H."/>
            <person name="Ichihara T."/>
            <person name="Shiohata N."/>
            <person name="Sano S."/>
            <person name="Moriya S."/>
            <person name="Momiyama H."/>
            <person name="Satoh N."/>
            <person name="Takami S."/>
            <person name="Terashima Y."/>
            <person name="Suzuki O."/>
            <person name="Nakagawa S."/>
            <person name="Senoh A."/>
            <person name="Mizoguchi H."/>
            <person name="Goto Y."/>
            <person name="Shimizu F."/>
            <person name="Wakebe H."/>
            <person name="Hishigaki H."/>
            <person name="Watanabe T."/>
            <person name="Sugiyama A."/>
            <person name="Takemoto M."/>
            <person name="Kawakami B."/>
            <person name="Yamazaki M."/>
            <person name="Watanabe K."/>
            <person name="Kumagai A."/>
            <person name="Itakura S."/>
            <person name="Fukuzumi Y."/>
            <person name="Fujimori Y."/>
            <person name="Komiyama M."/>
            <person name="Tashiro H."/>
            <person name="Tanigami A."/>
            <person name="Fujiwara T."/>
            <person name="Ono T."/>
            <person name="Yamada K."/>
            <person name="Fujii Y."/>
            <person name="Ozaki K."/>
            <person name="Hirao M."/>
            <person name="Ohmori Y."/>
            <person name="Kawabata A."/>
            <person name="Hikiji T."/>
            <person name="Kobatake N."/>
            <person name="Inagaki H."/>
            <person name="Ikema Y."/>
            <person name="Okamoto S."/>
            <person name="Okitani R."/>
            <person name="Kawakami T."/>
            <person name="Noguchi S."/>
            <person name="Itoh T."/>
            <person name="Shigeta K."/>
            <person name="Senba T."/>
            <person name="Matsumura K."/>
            <person name="Nakajima Y."/>
            <person name="Mizuno T."/>
            <person name="Morinaga M."/>
            <person name="Sasaki M."/>
            <person name="Togashi T."/>
            <person name="Oyama M."/>
            <person name="Hata H."/>
            <person name="Watanabe M."/>
            <person name="Komatsu T."/>
            <person name="Mizushima-Sugano J."/>
            <person name="Satoh T."/>
            <person name="Shirai Y."/>
            <person name="Takahashi Y."/>
            <person name="Nakagawa K."/>
            <person name="Okumura K."/>
            <person name="Nagase T."/>
            <person name="Nomura N."/>
            <person name="Kikuchi H."/>
            <person name="Masuho Y."/>
            <person name="Yamashita R."/>
            <person name="Nakai K."/>
            <person name="Yada T."/>
            <person name="Nakamura Y."/>
            <person name="Ohara O."/>
            <person name="Isogai T."/>
            <person name="Sugano S."/>
        </authorList>
    </citation>
    <scope>NUCLEOTIDE SEQUENCE [LARGE SCALE MRNA]</scope>
    <source>
        <tissue>Testis</tissue>
    </source>
</reference>
<reference key="2">
    <citation type="submission" date="2005-07" db="EMBL/GenBank/DDBJ databases">
        <authorList>
            <person name="Mural R.J."/>
            <person name="Istrail S."/>
            <person name="Sutton G.G."/>
            <person name="Florea L."/>
            <person name="Halpern A.L."/>
            <person name="Mobarry C.M."/>
            <person name="Lippert R."/>
            <person name="Walenz B."/>
            <person name="Shatkay H."/>
            <person name="Dew I."/>
            <person name="Miller J.R."/>
            <person name="Flanigan M.J."/>
            <person name="Edwards N.J."/>
            <person name="Bolanos R."/>
            <person name="Fasulo D."/>
            <person name="Halldorsson B.V."/>
            <person name="Hannenhalli S."/>
            <person name="Turner R."/>
            <person name="Yooseph S."/>
            <person name="Lu F."/>
            <person name="Nusskern D.R."/>
            <person name="Shue B.C."/>
            <person name="Zheng X.H."/>
            <person name="Zhong F."/>
            <person name="Delcher A.L."/>
            <person name="Huson D.H."/>
            <person name="Kravitz S.A."/>
            <person name="Mouchard L."/>
            <person name="Reinert K."/>
            <person name="Remington K.A."/>
            <person name="Clark A.G."/>
            <person name="Waterman M.S."/>
            <person name="Eichler E.E."/>
            <person name="Adams M.D."/>
            <person name="Hunkapiller M.W."/>
            <person name="Myers E.W."/>
            <person name="Venter J.C."/>
        </authorList>
    </citation>
    <scope>NUCLEOTIDE SEQUENCE [LARGE SCALE GENOMIC DNA]</scope>
</reference>
<proteinExistence type="evidence at protein level"/>
<organism>
    <name type="scientific">Homo sapiens</name>
    <name type="common">Human</name>
    <dbReference type="NCBI Taxonomy" id="9606"/>
    <lineage>
        <taxon>Eukaryota</taxon>
        <taxon>Metazoa</taxon>
        <taxon>Chordata</taxon>
        <taxon>Craniata</taxon>
        <taxon>Vertebrata</taxon>
        <taxon>Euteleostomi</taxon>
        <taxon>Mammalia</taxon>
        <taxon>Eutheria</taxon>
        <taxon>Euarchontoglires</taxon>
        <taxon>Primates</taxon>
        <taxon>Haplorrhini</taxon>
        <taxon>Catarrhini</taxon>
        <taxon>Hominidae</taxon>
        <taxon>Homo</taxon>
    </lineage>
</organism>
<accession>Q6ZQQ2</accession>
<feature type="chain" id="PRO_0000332290" description="Spermatogenesis-associated protein 31D1">
    <location>
        <begin position="1"/>
        <end position="1576"/>
    </location>
</feature>
<feature type="transmembrane region" description="Helical" evidence="2">
    <location>
        <begin position="29"/>
        <end position="49"/>
    </location>
</feature>
<feature type="region of interest" description="Disordered" evidence="3">
    <location>
        <begin position="170"/>
        <end position="197"/>
    </location>
</feature>
<feature type="region of interest" description="Disordered" evidence="3">
    <location>
        <begin position="542"/>
        <end position="572"/>
    </location>
</feature>
<feature type="region of interest" description="Disordered" evidence="3">
    <location>
        <begin position="782"/>
        <end position="801"/>
    </location>
</feature>
<feature type="region of interest" description="Disordered" evidence="3">
    <location>
        <begin position="952"/>
        <end position="1033"/>
    </location>
</feature>
<feature type="region of interest" description="Disordered" evidence="3">
    <location>
        <begin position="1293"/>
        <end position="1347"/>
    </location>
</feature>
<feature type="compositionally biased region" description="Pro residues" evidence="3">
    <location>
        <begin position="546"/>
        <end position="565"/>
    </location>
</feature>
<feature type="compositionally biased region" description="Polar residues" evidence="3">
    <location>
        <begin position="966"/>
        <end position="980"/>
    </location>
</feature>
<feature type="compositionally biased region" description="Basic and acidic residues" evidence="3">
    <location>
        <begin position="1004"/>
        <end position="1019"/>
    </location>
</feature>
<feature type="compositionally biased region" description="Polar residues" evidence="3">
    <location>
        <begin position="1020"/>
        <end position="1032"/>
    </location>
</feature>
<name>S31D1_HUMAN</name>
<protein>
    <recommendedName>
        <fullName>Spermatogenesis-associated protein 31D1</fullName>
    </recommendedName>
    <alternativeName>
        <fullName>Protein FAM75D1</fullName>
    </alternativeName>
</protein>
<evidence type="ECO:0000250" key="1"/>
<evidence type="ECO:0000255" key="2"/>
<evidence type="ECO:0000256" key="3">
    <source>
        <dbReference type="SAM" id="MobiDB-lite"/>
    </source>
</evidence>
<evidence type="ECO:0000305" key="4"/>
<dbReference type="EMBL" id="AK128831">
    <property type="protein sequence ID" value="BAC87631.1"/>
    <property type="molecule type" value="mRNA"/>
</dbReference>
<dbReference type="EMBL" id="CH471089">
    <property type="protein sequence ID" value="EAW62640.1"/>
    <property type="molecule type" value="Genomic_DNA"/>
</dbReference>
<dbReference type="CCDS" id="CCDS47986.1"/>
<dbReference type="RefSeq" id="NP_001001670.1">
    <property type="nucleotide sequence ID" value="NM_001001670.3"/>
</dbReference>
<dbReference type="SMR" id="Q6ZQQ2"/>
<dbReference type="BioGRID" id="133260">
    <property type="interactions" value="2"/>
</dbReference>
<dbReference type="STRING" id="9606.ENSP00000341988"/>
<dbReference type="GlyGen" id="Q6ZQQ2">
    <property type="glycosylation" value="1 site"/>
</dbReference>
<dbReference type="iPTMnet" id="Q6ZQQ2"/>
<dbReference type="PhosphoSitePlus" id="Q6ZQQ2"/>
<dbReference type="BioMuta" id="SPATA31D1"/>
<dbReference type="DMDM" id="74710945"/>
<dbReference type="MassIVE" id="Q6ZQQ2"/>
<dbReference type="PaxDb" id="9606-ENSP00000341988"/>
<dbReference type="PeptideAtlas" id="Q6ZQQ2"/>
<dbReference type="ProteomicsDB" id="68084"/>
<dbReference type="Antibodypedia" id="64398">
    <property type="antibodies" value="4 antibodies from 4 providers"/>
</dbReference>
<dbReference type="DNASU" id="389763"/>
<dbReference type="Ensembl" id="ENST00000344803.3">
    <property type="protein sequence ID" value="ENSP00000341988.2"/>
    <property type="gene ID" value="ENSG00000214929.4"/>
</dbReference>
<dbReference type="GeneID" id="389763"/>
<dbReference type="KEGG" id="hsa:389763"/>
<dbReference type="MANE-Select" id="ENST00000344803.3">
    <property type="protein sequence ID" value="ENSP00000341988.2"/>
    <property type="RefSeq nucleotide sequence ID" value="NM_001001670.3"/>
    <property type="RefSeq protein sequence ID" value="NP_001001670.1"/>
</dbReference>
<dbReference type="UCSC" id="uc004amn.3">
    <property type="organism name" value="human"/>
</dbReference>
<dbReference type="AGR" id="HGNC:37283"/>
<dbReference type="CTD" id="389763"/>
<dbReference type="DisGeNET" id="389763"/>
<dbReference type="GeneCards" id="SPATA31D1"/>
<dbReference type="HGNC" id="HGNC:37283">
    <property type="gene designation" value="SPATA31D1"/>
</dbReference>
<dbReference type="HPA" id="ENSG00000214929">
    <property type="expression patterns" value="Tissue enriched (testis)"/>
</dbReference>
<dbReference type="neXtProt" id="NX_Q6ZQQ2"/>
<dbReference type="OpenTargets" id="ENSG00000214929"/>
<dbReference type="VEuPathDB" id="HostDB:ENSG00000214929"/>
<dbReference type="eggNOG" id="ENOG502SH7F">
    <property type="taxonomic scope" value="Eukaryota"/>
</dbReference>
<dbReference type="GeneTree" id="ENSGT00950000183043"/>
<dbReference type="HOGENOM" id="CLU_005668_2_0_1"/>
<dbReference type="InParanoid" id="Q6ZQQ2"/>
<dbReference type="OMA" id="FHMRMLW"/>
<dbReference type="OrthoDB" id="9616581at2759"/>
<dbReference type="PAN-GO" id="Q6ZQQ2">
    <property type="GO annotations" value="0 GO annotations based on evolutionary models"/>
</dbReference>
<dbReference type="PhylomeDB" id="Q6ZQQ2"/>
<dbReference type="TreeFam" id="TF338531"/>
<dbReference type="PathwayCommons" id="Q6ZQQ2"/>
<dbReference type="SignaLink" id="Q6ZQQ2"/>
<dbReference type="BioGRID-ORCS" id="389763">
    <property type="hits" value="7 hits in 1138 CRISPR screens"/>
</dbReference>
<dbReference type="GenomeRNAi" id="389763"/>
<dbReference type="Pharos" id="Q6ZQQ2">
    <property type="development level" value="Tdark"/>
</dbReference>
<dbReference type="PRO" id="PR:Q6ZQQ2"/>
<dbReference type="Proteomes" id="UP000005640">
    <property type="component" value="Chromosome 9"/>
</dbReference>
<dbReference type="RNAct" id="Q6ZQQ2">
    <property type="molecule type" value="protein"/>
</dbReference>
<dbReference type="Bgee" id="ENSG00000214929">
    <property type="expression patterns" value="Expressed in sperm and 19 other cell types or tissues"/>
</dbReference>
<dbReference type="GO" id="GO:0016020">
    <property type="term" value="C:membrane"/>
    <property type="evidence" value="ECO:0007669"/>
    <property type="project" value="UniProtKB-SubCell"/>
</dbReference>
<dbReference type="GO" id="GO:0030154">
    <property type="term" value="P:cell differentiation"/>
    <property type="evidence" value="ECO:0007669"/>
    <property type="project" value="UniProtKB-KW"/>
</dbReference>
<dbReference type="GO" id="GO:0007283">
    <property type="term" value="P:spermatogenesis"/>
    <property type="evidence" value="ECO:0007669"/>
    <property type="project" value="UniProtKB-KW"/>
</dbReference>
<dbReference type="InterPro" id="IPR039509">
    <property type="entry name" value="SPATA31"/>
</dbReference>
<dbReference type="InterPro" id="IPR027970">
    <property type="entry name" value="SPATA31F3-like"/>
</dbReference>
<dbReference type="PANTHER" id="PTHR21859">
    <property type="entry name" value="ACROSOME-SPECIFIC PROTEIN"/>
    <property type="match status" value="1"/>
</dbReference>
<dbReference type="PANTHER" id="PTHR21859:SF12">
    <property type="entry name" value="SPERMATOGENESIS-ASSOCIATED PROTEIN 31D1"/>
    <property type="match status" value="1"/>
</dbReference>
<dbReference type="Pfam" id="PF15371">
    <property type="entry name" value="DUF4599"/>
    <property type="match status" value="1"/>
</dbReference>
<dbReference type="Pfam" id="PF14650">
    <property type="entry name" value="FAM75"/>
    <property type="match status" value="1"/>
</dbReference>
<comment type="function">
    <text evidence="1">May play a role in spermatogenesis.</text>
</comment>
<comment type="subcellular location">
    <subcellularLocation>
        <location evidence="4">Membrane</location>
        <topology evidence="4">Single-pass membrane protein</topology>
    </subcellularLocation>
</comment>
<comment type="similarity">
    <text evidence="4">Belongs to the SPATA31 family.</text>
</comment>
<keyword id="KW-0221">Differentiation</keyword>
<keyword id="KW-0472">Membrane</keyword>
<keyword id="KW-1267">Proteomics identification</keyword>
<keyword id="KW-1185">Reference proteome</keyword>
<keyword id="KW-0744">Spermatogenesis</keyword>
<keyword id="KW-0812">Transmembrane</keyword>
<keyword id="KW-1133">Transmembrane helix</keyword>